<name>DAPD_ECO24</name>
<gene>
    <name evidence="1" type="primary">dapD</name>
    <name type="ordered locus">EcE24377A_0169</name>
</gene>
<proteinExistence type="inferred from homology"/>
<comment type="catalytic activity">
    <reaction evidence="1">
        <text>(S)-2,3,4,5-tetrahydrodipicolinate + succinyl-CoA + H2O = (S)-2-succinylamino-6-oxoheptanedioate + CoA</text>
        <dbReference type="Rhea" id="RHEA:17325"/>
        <dbReference type="ChEBI" id="CHEBI:15377"/>
        <dbReference type="ChEBI" id="CHEBI:15685"/>
        <dbReference type="ChEBI" id="CHEBI:16845"/>
        <dbReference type="ChEBI" id="CHEBI:57287"/>
        <dbReference type="ChEBI" id="CHEBI:57292"/>
        <dbReference type="EC" id="2.3.1.117"/>
    </reaction>
</comment>
<comment type="pathway">
    <text evidence="1">Amino-acid biosynthesis; L-lysine biosynthesis via DAP pathway; LL-2,6-diaminopimelate from (S)-tetrahydrodipicolinate (succinylase route): step 1/3.</text>
</comment>
<comment type="subunit">
    <text evidence="1">Homotrimer.</text>
</comment>
<comment type="subcellular location">
    <subcellularLocation>
        <location evidence="1">Cytoplasm</location>
    </subcellularLocation>
</comment>
<comment type="similarity">
    <text evidence="1">Belongs to the transferase hexapeptide repeat family.</text>
</comment>
<dbReference type="EC" id="2.3.1.117" evidence="1"/>
<dbReference type="EMBL" id="CP000800">
    <property type="protein sequence ID" value="ABV17775.1"/>
    <property type="molecule type" value="Genomic_DNA"/>
</dbReference>
<dbReference type="RefSeq" id="WP_001186650.1">
    <property type="nucleotide sequence ID" value="NC_009801.1"/>
</dbReference>
<dbReference type="SMR" id="A7ZHQ6"/>
<dbReference type="GeneID" id="93777259"/>
<dbReference type="KEGG" id="ecw:EcE24377A_0169"/>
<dbReference type="HOGENOM" id="CLU_050859_0_1_6"/>
<dbReference type="UniPathway" id="UPA00034">
    <property type="reaction ID" value="UER00019"/>
</dbReference>
<dbReference type="Proteomes" id="UP000001122">
    <property type="component" value="Chromosome"/>
</dbReference>
<dbReference type="GO" id="GO:0005737">
    <property type="term" value="C:cytoplasm"/>
    <property type="evidence" value="ECO:0007669"/>
    <property type="project" value="UniProtKB-SubCell"/>
</dbReference>
<dbReference type="GO" id="GO:0008666">
    <property type="term" value="F:2,3,4,5-tetrahydropyridine-2,6-dicarboxylate N-succinyltransferase activity"/>
    <property type="evidence" value="ECO:0007669"/>
    <property type="project" value="UniProtKB-UniRule"/>
</dbReference>
<dbReference type="GO" id="GO:0016779">
    <property type="term" value="F:nucleotidyltransferase activity"/>
    <property type="evidence" value="ECO:0007669"/>
    <property type="project" value="TreeGrafter"/>
</dbReference>
<dbReference type="GO" id="GO:0019877">
    <property type="term" value="P:diaminopimelate biosynthetic process"/>
    <property type="evidence" value="ECO:0007669"/>
    <property type="project" value="UniProtKB-UniRule"/>
</dbReference>
<dbReference type="GO" id="GO:0009089">
    <property type="term" value="P:lysine biosynthetic process via diaminopimelate"/>
    <property type="evidence" value="ECO:0007669"/>
    <property type="project" value="UniProtKB-UniRule"/>
</dbReference>
<dbReference type="CDD" id="cd03350">
    <property type="entry name" value="LbH_THP_succinylT"/>
    <property type="match status" value="1"/>
</dbReference>
<dbReference type="FunFam" id="1.10.166.10:FF:000001">
    <property type="entry name" value="2,3,4,5-tetrahydropyridine-2,6-dicarboxylate N-succinyltransferase"/>
    <property type="match status" value="1"/>
</dbReference>
<dbReference type="FunFam" id="2.160.10.10:FF:000004">
    <property type="entry name" value="2,3,4,5-tetrahydropyridine-2,6-dicarboxylate N-succinyltransferase"/>
    <property type="match status" value="1"/>
</dbReference>
<dbReference type="Gene3D" id="2.160.10.10">
    <property type="entry name" value="Hexapeptide repeat proteins"/>
    <property type="match status" value="1"/>
</dbReference>
<dbReference type="Gene3D" id="1.10.166.10">
    <property type="entry name" value="Tetrahydrodipicolinate-N-succinyltransferase, N-terminal domain"/>
    <property type="match status" value="1"/>
</dbReference>
<dbReference type="HAMAP" id="MF_00811">
    <property type="entry name" value="DapD"/>
    <property type="match status" value="1"/>
</dbReference>
<dbReference type="InterPro" id="IPR005664">
    <property type="entry name" value="DapD_Trfase_Hexpep_rpt_fam"/>
</dbReference>
<dbReference type="InterPro" id="IPR001451">
    <property type="entry name" value="Hexapep"/>
</dbReference>
<dbReference type="InterPro" id="IPR018357">
    <property type="entry name" value="Hexapep_transf_CS"/>
</dbReference>
<dbReference type="InterPro" id="IPR023180">
    <property type="entry name" value="THP_succinylTrfase_dom1"/>
</dbReference>
<dbReference type="InterPro" id="IPR037133">
    <property type="entry name" value="THP_succinylTrfase_N_sf"/>
</dbReference>
<dbReference type="InterPro" id="IPR011004">
    <property type="entry name" value="Trimer_LpxA-like_sf"/>
</dbReference>
<dbReference type="NCBIfam" id="TIGR00965">
    <property type="entry name" value="dapD"/>
    <property type="match status" value="1"/>
</dbReference>
<dbReference type="NCBIfam" id="NF008808">
    <property type="entry name" value="PRK11830.1"/>
    <property type="match status" value="1"/>
</dbReference>
<dbReference type="PANTHER" id="PTHR19136:SF52">
    <property type="entry name" value="2,3,4,5-TETRAHYDROPYRIDINE-2,6-DICARBOXYLATE N-SUCCINYLTRANSFERASE"/>
    <property type="match status" value="1"/>
</dbReference>
<dbReference type="PANTHER" id="PTHR19136">
    <property type="entry name" value="MOLYBDENUM COFACTOR GUANYLYLTRANSFERASE"/>
    <property type="match status" value="1"/>
</dbReference>
<dbReference type="Pfam" id="PF14602">
    <property type="entry name" value="Hexapep_2"/>
    <property type="match status" value="1"/>
</dbReference>
<dbReference type="Pfam" id="PF14805">
    <property type="entry name" value="THDPS_N_2"/>
    <property type="match status" value="1"/>
</dbReference>
<dbReference type="SUPFAM" id="SSF51161">
    <property type="entry name" value="Trimeric LpxA-like enzymes"/>
    <property type="match status" value="1"/>
</dbReference>
<dbReference type="PROSITE" id="PS00101">
    <property type="entry name" value="HEXAPEP_TRANSFERASES"/>
    <property type="match status" value="1"/>
</dbReference>
<evidence type="ECO:0000255" key="1">
    <source>
        <dbReference type="HAMAP-Rule" id="MF_00811"/>
    </source>
</evidence>
<accession>A7ZHQ6</accession>
<feature type="chain" id="PRO_1000062277" description="2,3,4,5-tetrahydropyridine-2,6-dicarboxylate N-succinyltransferase">
    <location>
        <begin position="1"/>
        <end position="274"/>
    </location>
</feature>
<feature type="binding site" evidence="1">
    <location>
        <position position="104"/>
    </location>
    <ligand>
        <name>substrate</name>
    </ligand>
</feature>
<feature type="binding site" evidence="1">
    <location>
        <position position="141"/>
    </location>
    <ligand>
        <name>substrate</name>
    </ligand>
</feature>
<reference key="1">
    <citation type="journal article" date="2008" name="J. Bacteriol.">
        <title>The pangenome structure of Escherichia coli: comparative genomic analysis of E. coli commensal and pathogenic isolates.</title>
        <authorList>
            <person name="Rasko D.A."/>
            <person name="Rosovitz M.J."/>
            <person name="Myers G.S.A."/>
            <person name="Mongodin E.F."/>
            <person name="Fricke W.F."/>
            <person name="Gajer P."/>
            <person name="Crabtree J."/>
            <person name="Sebaihia M."/>
            <person name="Thomson N.R."/>
            <person name="Chaudhuri R."/>
            <person name="Henderson I.R."/>
            <person name="Sperandio V."/>
            <person name="Ravel J."/>
        </authorList>
    </citation>
    <scope>NUCLEOTIDE SEQUENCE [LARGE SCALE GENOMIC DNA]</scope>
    <source>
        <strain>E24377A / ETEC</strain>
    </source>
</reference>
<keyword id="KW-0012">Acyltransferase</keyword>
<keyword id="KW-0028">Amino-acid biosynthesis</keyword>
<keyword id="KW-0963">Cytoplasm</keyword>
<keyword id="KW-0220">Diaminopimelate biosynthesis</keyword>
<keyword id="KW-0457">Lysine biosynthesis</keyword>
<keyword id="KW-1185">Reference proteome</keyword>
<keyword id="KW-0677">Repeat</keyword>
<keyword id="KW-0808">Transferase</keyword>
<sequence length="274" mass="29892">MQQLQNIIETAFERRAEITPANADTVTREAVNQVIALLDSGALRVAEKIDGQWVTHQWLKKAVLLSFRINDNQVIEGAESRYFDKVPMKFADYDEARFQKEGFRVVPPAAVRQGAFIARNTVLMPSYVNIGAYVDEGTMVDTWATVGSCAQIGKNVHLSGGVGIGGVLEPLQANPTIIEDNCFIGARSEVVEGVIVEEGSVISMGVYIGQSTRIYDRETGEIHYGRVPAGSVVVSGNLPSKDGKYSLYCAVIVKKVDAKTRGKVGINELLRTID</sequence>
<organism>
    <name type="scientific">Escherichia coli O139:H28 (strain E24377A / ETEC)</name>
    <dbReference type="NCBI Taxonomy" id="331111"/>
    <lineage>
        <taxon>Bacteria</taxon>
        <taxon>Pseudomonadati</taxon>
        <taxon>Pseudomonadota</taxon>
        <taxon>Gammaproteobacteria</taxon>
        <taxon>Enterobacterales</taxon>
        <taxon>Enterobacteriaceae</taxon>
        <taxon>Escherichia</taxon>
    </lineage>
</organism>
<protein>
    <recommendedName>
        <fullName evidence="1">2,3,4,5-tetrahydropyridine-2,6-dicarboxylate N-succinyltransferase</fullName>
        <ecNumber evidence="1">2.3.1.117</ecNumber>
    </recommendedName>
    <alternativeName>
        <fullName evidence="1">Tetrahydrodipicolinate N-succinyltransferase</fullName>
        <shortName evidence="1">THDP succinyltransferase</shortName>
        <shortName evidence="1">THP succinyltransferase</shortName>
        <shortName evidence="1">Tetrahydropicolinate succinylase</shortName>
    </alternativeName>
</protein>